<feature type="chain" id="PRO_0000069409" description="D(5)-like dopamine receptor">
    <location>
        <begin position="1"/>
        <end position="463"/>
    </location>
</feature>
<feature type="topological domain" description="Extracellular" evidence="1">
    <location>
        <begin position="1"/>
        <end position="39"/>
    </location>
</feature>
<feature type="transmembrane region" description="Helical; Name=1" evidence="1">
    <location>
        <begin position="40"/>
        <end position="65"/>
    </location>
</feature>
<feature type="topological domain" description="Cytoplasmic" evidence="1">
    <location>
        <begin position="66"/>
        <end position="76"/>
    </location>
</feature>
<feature type="transmembrane region" description="Helical; Name=2" evidence="1">
    <location>
        <begin position="77"/>
        <end position="103"/>
    </location>
</feature>
<feature type="topological domain" description="Extracellular" evidence="1">
    <location>
        <begin position="104"/>
        <end position="112"/>
    </location>
</feature>
<feature type="transmembrane region" description="Helical; Name=3" evidence="1">
    <location>
        <begin position="113"/>
        <end position="135"/>
    </location>
</feature>
<feature type="topological domain" description="Cytoplasmic" evidence="1">
    <location>
        <begin position="136"/>
        <end position="154"/>
    </location>
</feature>
<feature type="transmembrane region" description="Helical; Name=4" evidence="1">
    <location>
        <begin position="155"/>
        <end position="180"/>
    </location>
</feature>
<feature type="topological domain" description="Extracellular" evidence="1">
    <location>
        <begin position="181"/>
        <end position="198"/>
    </location>
</feature>
<feature type="transmembrane region" description="Helical; Name=5" evidence="1">
    <location>
        <begin position="199"/>
        <end position="223"/>
    </location>
</feature>
<feature type="topological domain" description="Cytoplasmic" evidence="1">
    <location>
        <begin position="224"/>
        <end position="273"/>
    </location>
</feature>
<feature type="transmembrane region" description="Helical; Name=6" evidence="1">
    <location>
        <begin position="274"/>
        <end position="301"/>
    </location>
</feature>
<feature type="topological domain" description="Extracellular" evidence="1">
    <location>
        <begin position="302"/>
        <end position="315"/>
    </location>
</feature>
<feature type="transmembrane region" description="Helical; Name=7" evidence="1">
    <location>
        <begin position="316"/>
        <end position="337"/>
    </location>
</feature>
<feature type="topological domain" description="Cytoplasmic" evidence="1">
    <location>
        <begin position="338"/>
        <end position="463"/>
    </location>
</feature>
<feature type="glycosylation site" description="N-linked (GlcNAc...) asparagine" evidence="1">
    <location>
        <position position="6"/>
    </location>
</feature>
<feature type="disulfide bond" evidence="2">
    <location>
        <begin position="112"/>
        <end position="194"/>
    </location>
</feature>
<sequence length="463" mass="51096">MENFYNETEPTEPRGGVDPLRVVTAAEDVPAPVGGVSVRALTGCVLCALIVSTLLGNTLVCAAVIKFRHLRSKVTNAFVVSLAVSDLFVAVLVMPWRAVSEVAGVWLFGRFCDTWVAFDIMCSTASILNLCVISMDRYWAISNPFRYERRMTRRFAFLMIAVAWTLSVLISFIPVQLNWHRADNNSSAHEQGDCNASLNRTYAISSSLISFYIPVLIMVGTYTRIFRIAQTQIRRISSLERAAGQRAQNQSHRASTHDESALKTSFKRETKVLKTLSVIMGVFVFCWLPFFVLNCVVPFCDVDKVGEPPCVSDTTFNIFVWFGWANSSLNPVIYAFNADFRKAFTTILGCSKFCSSSAVQAVDFSNELVSYHHDTTLQKEPVPGPGAHRLVAPLPQNRGDAGPNFDKVSVVSDDSRADRNLLLPAILQCDCEAEISLDMVPFGSSGPADSFLIPGQIQDLGDL</sequence>
<reference key="1">
    <citation type="journal article" date="1995" name="Genomics">
        <title>Analysis of the dopamine receptor family in the compact genome of the puffer fish Fugu rubripes.</title>
        <authorList>
            <person name="Machae A.D."/>
            <person name="Brenner S."/>
        </authorList>
    </citation>
    <scope>NUCLEOTIDE SEQUENCE [GENOMIC DNA]</scope>
</reference>
<accession>P53454</accession>
<protein>
    <recommendedName>
        <fullName>D(5)-like dopamine receptor</fullName>
    </recommendedName>
</protein>
<keyword id="KW-1003">Cell membrane</keyword>
<keyword id="KW-1015">Disulfide bond</keyword>
<keyword id="KW-0297">G-protein coupled receptor</keyword>
<keyword id="KW-0325">Glycoprotein</keyword>
<keyword id="KW-0472">Membrane</keyword>
<keyword id="KW-0675">Receptor</keyword>
<keyword id="KW-1185">Reference proteome</keyword>
<keyword id="KW-0807">Transducer</keyword>
<keyword id="KW-0812">Transmembrane</keyword>
<keyword id="KW-1133">Transmembrane helix</keyword>
<proteinExistence type="inferred from homology"/>
<evidence type="ECO:0000255" key="1"/>
<evidence type="ECO:0000255" key="2">
    <source>
        <dbReference type="PROSITE-ProRule" id="PRU00521"/>
    </source>
</evidence>
<comment type="function">
    <text>Receptor for dopamine.</text>
</comment>
<comment type="subcellular location">
    <subcellularLocation>
        <location>Cell membrane</location>
        <topology>Multi-pass membrane protein</topology>
    </subcellularLocation>
</comment>
<comment type="similarity">
    <text evidence="2">Belongs to the G-protein coupled receptor 1 family.</text>
</comment>
<organism>
    <name type="scientific">Takifugu rubripes</name>
    <name type="common">Japanese pufferfish</name>
    <name type="synonym">Fugu rubripes</name>
    <dbReference type="NCBI Taxonomy" id="31033"/>
    <lineage>
        <taxon>Eukaryota</taxon>
        <taxon>Metazoa</taxon>
        <taxon>Chordata</taxon>
        <taxon>Craniata</taxon>
        <taxon>Vertebrata</taxon>
        <taxon>Euteleostomi</taxon>
        <taxon>Actinopterygii</taxon>
        <taxon>Neopterygii</taxon>
        <taxon>Teleostei</taxon>
        <taxon>Neoteleostei</taxon>
        <taxon>Acanthomorphata</taxon>
        <taxon>Eupercaria</taxon>
        <taxon>Tetraodontiformes</taxon>
        <taxon>Tetradontoidea</taxon>
        <taxon>Tetraodontidae</taxon>
        <taxon>Takifugu</taxon>
    </lineage>
</organism>
<dbReference type="EMBL" id="X80177">
    <property type="protein sequence ID" value="CAA56457.1"/>
    <property type="molecule type" value="Genomic_DNA"/>
</dbReference>
<dbReference type="PIR" id="B56849">
    <property type="entry name" value="B56849"/>
</dbReference>
<dbReference type="SMR" id="P53454"/>
<dbReference type="FunCoup" id="P53454">
    <property type="interactions" value="160"/>
</dbReference>
<dbReference type="STRING" id="31033.ENSTRUP00000065233"/>
<dbReference type="GlyCosmos" id="P53454">
    <property type="glycosylation" value="1 site, No reported glycans"/>
</dbReference>
<dbReference type="eggNOG" id="KOG3656">
    <property type="taxonomic scope" value="Eukaryota"/>
</dbReference>
<dbReference type="InParanoid" id="P53454"/>
<dbReference type="OrthoDB" id="6021915at2759"/>
<dbReference type="Proteomes" id="UP000005226">
    <property type="component" value="Unplaced"/>
</dbReference>
<dbReference type="GO" id="GO:0005886">
    <property type="term" value="C:plasma membrane"/>
    <property type="evidence" value="ECO:0007669"/>
    <property type="project" value="UniProtKB-SubCell"/>
</dbReference>
<dbReference type="GO" id="GO:0004930">
    <property type="term" value="F:G protein-coupled receptor activity"/>
    <property type="evidence" value="ECO:0007669"/>
    <property type="project" value="UniProtKB-KW"/>
</dbReference>
<dbReference type="GO" id="GO:0071880">
    <property type="term" value="P:adenylate cyclase-activating adrenergic receptor signaling pathway"/>
    <property type="evidence" value="ECO:0007669"/>
    <property type="project" value="TreeGrafter"/>
</dbReference>
<dbReference type="GO" id="GO:0043410">
    <property type="term" value="P:positive regulation of MAPK cascade"/>
    <property type="evidence" value="ECO:0007669"/>
    <property type="project" value="TreeGrafter"/>
</dbReference>
<dbReference type="CDD" id="cd15057">
    <property type="entry name" value="7tmA_D1-like_dopamine_R"/>
    <property type="match status" value="1"/>
</dbReference>
<dbReference type="FunFam" id="1.20.1070.10:FF:000691">
    <property type="entry name" value="Predicted vertebrate-like dopamine D1-like G-protein coupled receptor"/>
    <property type="match status" value="1"/>
</dbReference>
<dbReference type="Gene3D" id="1.20.1070.10">
    <property type="entry name" value="Rhodopsin 7-helix transmembrane proteins"/>
    <property type="match status" value="1"/>
</dbReference>
<dbReference type="InterPro" id="IPR000929">
    <property type="entry name" value="Dopamine_rcpt"/>
</dbReference>
<dbReference type="InterPro" id="IPR000276">
    <property type="entry name" value="GPCR_Rhodpsn"/>
</dbReference>
<dbReference type="InterPro" id="IPR017452">
    <property type="entry name" value="GPCR_Rhodpsn_7TM"/>
</dbReference>
<dbReference type="PANTHER" id="PTHR24248">
    <property type="entry name" value="ADRENERGIC RECEPTOR-RELATED G-PROTEIN COUPLED RECEPTOR"/>
    <property type="match status" value="1"/>
</dbReference>
<dbReference type="PANTHER" id="PTHR24248:SF123">
    <property type="entry name" value="G-PROTEIN COUPLED RECEPTORS FAMILY 1 PROFILE DOMAIN-CONTAINING PROTEIN"/>
    <property type="match status" value="1"/>
</dbReference>
<dbReference type="Pfam" id="PF00001">
    <property type="entry name" value="7tm_1"/>
    <property type="match status" value="1"/>
</dbReference>
<dbReference type="PRINTS" id="PR00242">
    <property type="entry name" value="DOPAMINER"/>
</dbReference>
<dbReference type="PRINTS" id="PR00237">
    <property type="entry name" value="GPCRRHODOPSN"/>
</dbReference>
<dbReference type="SMART" id="SM01381">
    <property type="entry name" value="7TM_GPCR_Srsx"/>
    <property type="match status" value="1"/>
</dbReference>
<dbReference type="SUPFAM" id="SSF81321">
    <property type="entry name" value="Family A G protein-coupled receptor-like"/>
    <property type="match status" value="1"/>
</dbReference>
<dbReference type="PROSITE" id="PS00237">
    <property type="entry name" value="G_PROTEIN_RECEP_F1_1"/>
    <property type="match status" value="1"/>
</dbReference>
<dbReference type="PROSITE" id="PS50262">
    <property type="entry name" value="G_PROTEIN_RECEP_F1_2"/>
    <property type="match status" value="1"/>
</dbReference>
<name>DRD5L_TAKRU</name>
<gene>
    <name type="primary">dl</name>
</gene>